<keyword id="KW-0143">Chaperone</keyword>
<sequence>MDYFTLFGLPARYQLDTQALSLRFQDLQRQYHPDKFASGSQAEQLAAVQQSATINQAWQTLRHPLMRAEYLLSLHGFDLASEQHTVRDTAFLMEQLELREELDEIEQAKDEARLESFIKRVKKMFDTRHQLMVEQLDNETWDAAADTVRKLRFLDKLRSSAEQLEEKLLDF</sequence>
<reference key="1">
    <citation type="journal article" date="2006" name="Mol. Microbiol.">
        <title>Role of pathogenicity island-associated integrases in the genome plasticity of uropathogenic Escherichia coli strain 536.</title>
        <authorList>
            <person name="Hochhut B."/>
            <person name="Wilde C."/>
            <person name="Balling G."/>
            <person name="Middendorf B."/>
            <person name="Dobrindt U."/>
            <person name="Brzuszkiewicz E."/>
            <person name="Gottschalk G."/>
            <person name="Carniel E."/>
            <person name="Hacker J."/>
        </authorList>
    </citation>
    <scope>NUCLEOTIDE SEQUENCE [LARGE SCALE GENOMIC DNA]</scope>
    <source>
        <strain>536 / UPEC</strain>
    </source>
</reference>
<gene>
    <name evidence="1" type="primary">hscB</name>
    <name type="ordered locus">ECP_2532</name>
</gene>
<proteinExistence type="inferred from homology"/>
<comment type="function">
    <text evidence="1">Co-chaperone involved in the maturation of iron-sulfur cluster-containing proteins. Seems to help targeting proteins to be folded toward HscA.</text>
</comment>
<comment type="subunit">
    <text evidence="1">Interacts with HscA and stimulates its ATPase activity. Interacts with IscU.</text>
</comment>
<comment type="similarity">
    <text evidence="1">Belongs to the HscB family.</text>
</comment>
<dbReference type="EMBL" id="CP000247">
    <property type="protein sequence ID" value="ABG70521.1"/>
    <property type="molecule type" value="Genomic_DNA"/>
</dbReference>
<dbReference type="RefSeq" id="WP_000384413.1">
    <property type="nucleotide sequence ID" value="NC_008253.1"/>
</dbReference>
<dbReference type="SMR" id="Q0TEV8"/>
<dbReference type="GeneID" id="75172640"/>
<dbReference type="KEGG" id="ecp:ECP_2532"/>
<dbReference type="HOGENOM" id="CLU_068529_2_0_6"/>
<dbReference type="Proteomes" id="UP000009182">
    <property type="component" value="Chromosome"/>
</dbReference>
<dbReference type="GO" id="GO:1990230">
    <property type="term" value="C:iron-sulfur cluster transfer complex"/>
    <property type="evidence" value="ECO:0007669"/>
    <property type="project" value="TreeGrafter"/>
</dbReference>
<dbReference type="GO" id="GO:0001671">
    <property type="term" value="F:ATPase activator activity"/>
    <property type="evidence" value="ECO:0007669"/>
    <property type="project" value="InterPro"/>
</dbReference>
<dbReference type="GO" id="GO:0051087">
    <property type="term" value="F:protein-folding chaperone binding"/>
    <property type="evidence" value="ECO:0007669"/>
    <property type="project" value="InterPro"/>
</dbReference>
<dbReference type="GO" id="GO:0044571">
    <property type="term" value="P:[2Fe-2S] cluster assembly"/>
    <property type="evidence" value="ECO:0007669"/>
    <property type="project" value="InterPro"/>
</dbReference>
<dbReference type="GO" id="GO:0051259">
    <property type="term" value="P:protein complex oligomerization"/>
    <property type="evidence" value="ECO:0007669"/>
    <property type="project" value="InterPro"/>
</dbReference>
<dbReference type="GO" id="GO:0006457">
    <property type="term" value="P:protein folding"/>
    <property type="evidence" value="ECO:0007669"/>
    <property type="project" value="UniProtKB-UniRule"/>
</dbReference>
<dbReference type="CDD" id="cd06257">
    <property type="entry name" value="DnaJ"/>
    <property type="match status" value="1"/>
</dbReference>
<dbReference type="FunFam" id="1.10.287.110:FF:000008">
    <property type="entry name" value="Co-chaperone protein HscB"/>
    <property type="match status" value="1"/>
</dbReference>
<dbReference type="FunFam" id="1.20.1280.20:FF:000001">
    <property type="entry name" value="Co-chaperone protein HscB"/>
    <property type="match status" value="1"/>
</dbReference>
<dbReference type="Gene3D" id="1.10.287.110">
    <property type="entry name" value="DnaJ domain"/>
    <property type="match status" value="1"/>
</dbReference>
<dbReference type="Gene3D" id="1.20.1280.20">
    <property type="entry name" value="HscB, C-terminal domain"/>
    <property type="match status" value="1"/>
</dbReference>
<dbReference type="HAMAP" id="MF_00682">
    <property type="entry name" value="HscB"/>
    <property type="match status" value="1"/>
</dbReference>
<dbReference type="InterPro" id="IPR001623">
    <property type="entry name" value="DnaJ_domain"/>
</dbReference>
<dbReference type="InterPro" id="IPR004640">
    <property type="entry name" value="HscB"/>
</dbReference>
<dbReference type="InterPro" id="IPR036386">
    <property type="entry name" value="HscB_C_sf"/>
</dbReference>
<dbReference type="InterPro" id="IPR009073">
    <property type="entry name" value="HscB_oligo_C"/>
</dbReference>
<dbReference type="InterPro" id="IPR036869">
    <property type="entry name" value="J_dom_sf"/>
</dbReference>
<dbReference type="NCBIfam" id="TIGR00714">
    <property type="entry name" value="hscB"/>
    <property type="match status" value="1"/>
</dbReference>
<dbReference type="NCBIfam" id="NF003449">
    <property type="entry name" value="PRK05014.1"/>
    <property type="match status" value="1"/>
</dbReference>
<dbReference type="PANTHER" id="PTHR14021">
    <property type="entry name" value="IRON-SULFUR CLUSTER CO-CHAPERONE PROTEIN HSCB"/>
    <property type="match status" value="1"/>
</dbReference>
<dbReference type="PANTHER" id="PTHR14021:SF15">
    <property type="entry name" value="IRON-SULFUR CLUSTER CO-CHAPERONE PROTEIN HSCB"/>
    <property type="match status" value="1"/>
</dbReference>
<dbReference type="Pfam" id="PF07743">
    <property type="entry name" value="HSCB_C"/>
    <property type="match status" value="1"/>
</dbReference>
<dbReference type="SMART" id="SM00271">
    <property type="entry name" value="DnaJ"/>
    <property type="match status" value="1"/>
</dbReference>
<dbReference type="SUPFAM" id="SSF46565">
    <property type="entry name" value="Chaperone J-domain"/>
    <property type="match status" value="1"/>
</dbReference>
<dbReference type="SUPFAM" id="SSF47144">
    <property type="entry name" value="HSC20 (HSCB), C-terminal oligomerisation domain"/>
    <property type="match status" value="1"/>
</dbReference>
<dbReference type="PROSITE" id="PS50076">
    <property type="entry name" value="DNAJ_2"/>
    <property type="match status" value="1"/>
</dbReference>
<accession>Q0TEV8</accession>
<organism>
    <name type="scientific">Escherichia coli O6:K15:H31 (strain 536 / UPEC)</name>
    <dbReference type="NCBI Taxonomy" id="362663"/>
    <lineage>
        <taxon>Bacteria</taxon>
        <taxon>Pseudomonadati</taxon>
        <taxon>Pseudomonadota</taxon>
        <taxon>Gammaproteobacteria</taxon>
        <taxon>Enterobacterales</taxon>
        <taxon>Enterobacteriaceae</taxon>
        <taxon>Escherichia</taxon>
    </lineage>
</organism>
<feature type="chain" id="PRO_1000083009" description="Co-chaperone protein HscB">
    <location>
        <begin position="1"/>
        <end position="171"/>
    </location>
</feature>
<feature type="domain" description="J" evidence="1">
    <location>
        <begin position="2"/>
        <end position="74"/>
    </location>
</feature>
<evidence type="ECO:0000255" key="1">
    <source>
        <dbReference type="HAMAP-Rule" id="MF_00682"/>
    </source>
</evidence>
<protein>
    <recommendedName>
        <fullName evidence="1">Co-chaperone protein HscB</fullName>
    </recommendedName>
    <alternativeName>
        <fullName evidence="1">Hsc20</fullName>
    </alternativeName>
</protein>
<name>HSCB_ECOL5</name>